<organism>
    <name type="scientific">Homo sapiens</name>
    <name type="common">Human</name>
    <dbReference type="NCBI Taxonomy" id="9606"/>
    <lineage>
        <taxon>Eukaryota</taxon>
        <taxon>Metazoa</taxon>
        <taxon>Chordata</taxon>
        <taxon>Craniata</taxon>
        <taxon>Vertebrata</taxon>
        <taxon>Euteleostomi</taxon>
        <taxon>Mammalia</taxon>
        <taxon>Eutheria</taxon>
        <taxon>Euarchontoglires</taxon>
        <taxon>Primates</taxon>
        <taxon>Haplorrhini</taxon>
        <taxon>Catarrhini</taxon>
        <taxon>Hominidae</taxon>
        <taxon>Homo</taxon>
    </lineage>
</organism>
<protein>
    <recommendedName>
        <fullName>HERV-H LTR-associating protein 1</fullName>
    </recommendedName>
</protein>
<sequence length="531" mass="58297">MLGFLSRGPSMKLCMGLACVLSLWNTVSGIKGEAKKEKGMTFLPTTVSGLREEERKEKGVAFLATTELPARSIDLSALNLTELVNGMLSRALKDSKKFFSLLSVTSYSSFAFHKFSVAVYNISNLKTVDPAKFPTRYCYCLNNRTNDLSDFTALLVDIIGNSTSYLTEIFKSTSILSVNQSNESDCIFICVMTGKSGRNLSDFWEIEEKYPIINYTFTSGLSGVLGAATRGTARTSKPTTKSQKTLPSTSPGHWTQSTPWASALRSSPWTETAAPSETEETLNTGRPPELPARATATWFSASHTLPALATRRVARTQWLTADRQTWASISSVPWAQTISEKKPGGSLWETRSSPPTTAGTEEAMNTTSLLAPAAEIMATPGSPSQASPTLGAFTHGTQTPSPTKATAPRYPQTGDLSAEWPFTAGEEPVLVPRPHQVSRCPQPLFKVGAMAAAPLTLAIQRLNPCLMELCQFFQQCLCMSQRSPRTEDMRYCLEYYSWFLKNATYICQRVKRVSHSHTLKQKCLENICKSV</sequence>
<proteinExistence type="evidence at transcript level"/>
<feature type="signal peptide" evidence="1">
    <location>
        <begin position="1"/>
        <end position="29"/>
    </location>
</feature>
<feature type="chain" id="PRO_0000394219" description="HERV-H LTR-associating protein 1">
    <location>
        <begin position="30"/>
        <end position="531"/>
    </location>
</feature>
<feature type="region of interest" description="Disordered" evidence="2">
    <location>
        <begin position="231"/>
        <end position="289"/>
    </location>
</feature>
<feature type="region of interest" description="Disordered" evidence="2">
    <location>
        <begin position="340"/>
        <end position="362"/>
    </location>
</feature>
<feature type="compositionally biased region" description="Polar residues" evidence="2">
    <location>
        <begin position="232"/>
        <end position="269"/>
    </location>
</feature>
<feature type="compositionally biased region" description="Polar residues" evidence="2">
    <location>
        <begin position="349"/>
        <end position="362"/>
    </location>
</feature>
<feature type="glycosylation site" description="N-linked (GlcNAc...) asparagine" evidence="1">
    <location>
        <position position="79"/>
    </location>
</feature>
<feature type="glycosylation site" description="N-linked (GlcNAc...) asparagine" evidence="1">
    <location>
        <position position="143"/>
    </location>
</feature>
<feature type="glycosylation site" description="N-linked (GlcNAc...) asparagine" evidence="1">
    <location>
        <position position="161"/>
    </location>
</feature>
<feature type="splice variant" id="VSP_039212" description="In isoform 2." evidence="3">
    <original>MLGFLSRGPSMKLCMGLACVLSLWNTVSGIKGEAKKEKGMTFLPTTVSGLREEERKEKGVAFLATTELPARSIDLSALNLTELVNGMLSRALKDSKKFFSLLSVTSYSSFAFHKFSVAVYNISNLKTVDPAKFPTRYCYCLNNRTNDLSDFTALLVDIIGNSTSYLTEIFKSTSILSVNQSNESDCIFICVMTGKSGRNLSDFWEIEEKYPIINYTFTSGLSGVL</original>
    <variation>MEETNSSSKDMYQSPGEAEGWRWKKGSDRGQNLFRKHSKCLILLIRERFESPHSYICSPVTFQFFYAQSVKHVNVTIDCLPE</variation>
    <location>
        <begin position="1"/>
        <end position="225"/>
    </location>
</feature>
<feature type="sequence conflict" description="In Ref. 1; AAD13107." evidence="4" ref="1">
    <original>L</original>
    <variation>S</variation>
    <location>
        <position position="390"/>
    </location>
</feature>
<reference key="1">
    <citation type="journal article" date="1999" name="Genomics">
        <title>Intergenic splicing between a HERV-H endogenous retrovirus and two adjacent human genes.</title>
        <authorList>
            <person name="Kowalski P.E."/>
            <person name="Freeman J.D."/>
            <person name="Mager D.L."/>
        </authorList>
    </citation>
    <scope>NUCLEOTIDE SEQUENCE [MRNA] (ISOFORM 2)</scope>
    <source>
        <tissue>Teratocarcinoma</tissue>
    </source>
</reference>
<reference key="2">
    <citation type="journal article" date="2006" name="Nature">
        <title>DNA sequence and analysis of human chromosome 8.</title>
        <authorList>
            <person name="Nusbaum C."/>
            <person name="Mikkelsen T.S."/>
            <person name="Zody M.C."/>
            <person name="Asakawa S."/>
            <person name="Taudien S."/>
            <person name="Garber M."/>
            <person name="Kodira C.D."/>
            <person name="Schueler M.G."/>
            <person name="Shimizu A."/>
            <person name="Whittaker C.A."/>
            <person name="Chang J.L."/>
            <person name="Cuomo C.A."/>
            <person name="Dewar K."/>
            <person name="FitzGerald M.G."/>
            <person name="Yang X."/>
            <person name="Allen N.R."/>
            <person name="Anderson S."/>
            <person name="Asakawa T."/>
            <person name="Blechschmidt K."/>
            <person name="Bloom T."/>
            <person name="Borowsky M.L."/>
            <person name="Butler J."/>
            <person name="Cook A."/>
            <person name="Corum B."/>
            <person name="DeArellano K."/>
            <person name="DeCaprio D."/>
            <person name="Dooley K.T."/>
            <person name="Dorris L. III"/>
            <person name="Engels R."/>
            <person name="Gloeckner G."/>
            <person name="Hafez N."/>
            <person name="Hagopian D.S."/>
            <person name="Hall J.L."/>
            <person name="Ishikawa S.K."/>
            <person name="Jaffe D.B."/>
            <person name="Kamat A."/>
            <person name="Kudoh J."/>
            <person name="Lehmann R."/>
            <person name="Lokitsang T."/>
            <person name="Macdonald P."/>
            <person name="Major J.E."/>
            <person name="Matthews C.D."/>
            <person name="Mauceli E."/>
            <person name="Menzel U."/>
            <person name="Mihalev A.H."/>
            <person name="Minoshima S."/>
            <person name="Murayama Y."/>
            <person name="Naylor J.W."/>
            <person name="Nicol R."/>
            <person name="Nguyen C."/>
            <person name="O'Leary S.B."/>
            <person name="O'Neill K."/>
            <person name="Parker S.C.J."/>
            <person name="Polley A."/>
            <person name="Raymond C.K."/>
            <person name="Reichwald K."/>
            <person name="Rodriguez J."/>
            <person name="Sasaki T."/>
            <person name="Schilhabel M."/>
            <person name="Siddiqui R."/>
            <person name="Smith C.L."/>
            <person name="Sneddon T.P."/>
            <person name="Talamas J.A."/>
            <person name="Tenzin P."/>
            <person name="Topham K."/>
            <person name="Venkataraman V."/>
            <person name="Wen G."/>
            <person name="Yamazaki S."/>
            <person name="Young S.K."/>
            <person name="Zeng Q."/>
            <person name="Zimmer A.R."/>
            <person name="Rosenthal A."/>
            <person name="Birren B.W."/>
            <person name="Platzer M."/>
            <person name="Shimizu N."/>
            <person name="Lander E.S."/>
        </authorList>
    </citation>
    <scope>NUCLEOTIDE SEQUENCE [LARGE SCALE GENOMIC DNA]</scope>
</reference>
<reference key="3">
    <citation type="journal article" date="1993" name="Nucleic Acids Res.">
        <title>Splicing of a human endogenous retrovirus to a novel phospholipase A2 related gene.</title>
        <authorList>
            <person name="Feuchter-Murthy A.E."/>
            <person name="Freeman J.D."/>
            <person name="Mager D.L."/>
        </authorList>
    </citation>
    <scope>ALTERNATIVE SPLICING</scope>
</reference>
<dbReference type="EMBL" id="AF110315">
    <property type="protein sequence ID" value="AAD13107.1"/>
    <property type="molecule type" value="mRNA"/>
</dbReference>
<dbReference type="EMBL" id="AC092817">
    <property type="status" value="NOT_ANNOTATED_CDS"/>
    <property type="molecule type" value="Genomic_DNA"/>
</dbReference>
<dbReference type="EMBL" id="AC100868">
    <property type="status" value="NOT_ANNOTATED_CDS"/>
    <property type="molecule type" value="Genomic_DNA"/>
</dbReference>
<dbReference type="EMBL" id="AC131042">
    <property type="status" value="NOT_ANNOTATED_CDS"/>
    <property type="molecule type" value="Genomic_DNA"/>
</dbReference>
<dbReference type="RefSeq" id="NP_001138567.1">
    <molecule id="C9JL84-1"/>
    <property type="nucleotide sequence ID" value="NM_001145095.3"/>
</dbReference>
<dbReference type="BioGRID" id="115395">
    <property type="interactions" value="2"/>
</dbReference>
<dbReference type="STRING" id="9606.ENSP00000500443"/>
<dbReference type="GlyCosmos" id="C9JL84">
    <property type="glycosylation" value="3 sites, No reported glycans"/>
</dbReference>
<dbReference type="GlyGen" id="C9JL84">
    <property type="glycosylation" value="3 sites"/>
</dbReference>
<dbReference type="iPTMnet" id="C9JL84"/>
<dbReference type="PhosphoSitePlus" id="C9JL84"/>
<dbReference type="BioMuta" id="HHLA1"/>
<dbReference type="jPOST" id="C9JL84"/>
<dbReference type="PeptideAtlas" id="C9JL84"/>
<dbReference type="ProteomicsDB" id="10668">
    <molecule id="C9JL84-1"/>
</dbReference>
<dbReference type="ProteomicsDB" id="10669">
    <molecule id="C9JL84-2"/>
</dbReference>
<dbReference type="Antibodypedia" id="67806">
    <property type="antibodies" value="18 antibodies from 9 providers"/>
</dbReference>
<dbReference type="DNASU" id="10086"/>
<dbReference type="Ensembl" id="ENST00000414222.2">
    <molecule id="C9JL84-1"/>
    <property type="protein sequence ID" value="ENSP00000388322.1"/>
    <property type="gene ID" value="ENSG00000132297.13"/>
</dbReference>
<dbReference type="GeneID" id="10086"/>
<dbReference type="KEGG" id="hsa:10086"/>
<dbReference type="MANE-Select" id="ENST00000414222.2">
    <property type="protein sequence ID" value="ENSP00000388322.1"/>
    <property type="RefSeq nucleotide sequence ID" value="NM_001145095.3"/>
    <property type="RefSeq protein sequence ID" value="NP_001138567.1"/>
</dbReference>
<dbReference type="UCSC" id="uc011liy.1">
    <molecule id="C9JL84-1"/>
    <property type="organism name" value="human"/>
</dbReference>
<dbReference type="AGR" id="HGNC:4904"/>
<dbReference type="CTD" id="10086"/>
<dbReference type="DisGeNET" id="10086"/>
<dbReference type="GeneCards" id="HHLA1"/>
<dbReference type="HGNC" id="HGNC:4904">
    <property type="gene designation" value="HHLA1"/>
</dbReference>
<dbReference type="HPA" id="ENSG00000132297">
    <property type="expression patterns" value="Not detected"/>
</dbReference>
<dbReference type="MIM" id="604109">
    <property type="type" value="gene"/>
</dbReference>
<dbReference type="neXtProt" id="NX_C9JL84"/>
<dbReference type="OpenTargets" id="ENSG00000132297"/>
<dbReference type="PharmGKB" id="PA29277"/>
<dbReference type="VEuPathDB" id="HostDB:ENSG00000132297"/>
<dbReference type="eggNOG" id="ENOG502S3MP">
    <property type="taxonomic scope" value="Eukaryota"/>
</dbReference>
<dbReference type="GeneTree" id="ENSGT00530000064699"/>
<dbReference type="HOGENOM" id="CLU_042998_0_0_1"/>
<dbReference type="InParanoid" id="C9JL84"/>
<dbReference type="OrthoDB" id="9902153at2759"/>
<dbReference type="PAN-GO" id="C9JL84">
    <property type="GO annotations" value="0 GO annotations based on evolutionary models"/>
</dbReference>
<dbReference type="PhylomeDB" id="C9JL84"/>
<dbReference type="PathwayCommons" id="C9JL84"/>
<dbReference type="SignaLink" id="C9JL84"/>
<dbReference type="BioGRID-ORCS" id="10086">
    <property type="hits" value="0 hits in 237 CRISPR screens"/>
</dbReference>
<dbReference type="GenomeRNAi" id="10086"/>
<dbReference type="Pharos" id="C9JL84">
    <property type="development level" value="Tdark"/>
</dbReference>
<dbReference type="PRO" id="PR:C9JL84"/>
<dbReference type="Proteomes" id="UP000005640">
    <property type="component" value="Chromosome 8"/>
</dbReference>
<dbReference type="RNAct" id="C9JL84">
    <property type="molecule type" value="protein"/>
</dbReference>
<dbReference type="Bgee" id="ENSG00000132297">
    <property type="expression patterns" value="Expressed in secondary oocyte and 13 other cell types or tissues"/>
</dbReference>
<dbReference type="ExpressionAtlas" id="C9JL84">
    <property type="expression patterns" value="baseline and differential"/>
</dbReference>
<dbReference type="GO" id="GO:0005576">
    <property type="term" value="C:extracellular region"/>
    <property type="evidence" value="ECO:0007669"/>
    <property type="project" value="UniProtKB-SubCell"/>
</dbReference>
<dbReference type="InterPro" id="IPR037643">
    <property type="entry name" value="HHLA1"/>
</dbReference>
<dbReference type="PANTHER" id="PTHR15299">
    <property type="entry name" value="HERV-H LTR-ASSOCIATING PROTEIN 1"/>
    <property type="match status" value="1"/>
</dbReference>
<dbReference type="PANTHER" id="PTHR15299:SF3">
    <property type="entry name" value="HERV-H LTR-ASSOCIATING PROTEIN 1"/>
    <property type="match status" value="1"/>
</dbReference>
<name>HHLA1_HUMAN</name>
<gene>
    <name type="primary">HHLA1</name>
</gene>
<accession>C9JL84</accession>
<keyword id="KW-0025">Alternative splicing</keyword>
<keyword id="KW-0325">Glycoprotein</keyword>
<keyword id="KW-1185">Reference proteome</keyword>
<keyword id="KW-0964">Secreted</keyword>
<keyword id="KW-0732">Signal</keyword>
<comment type="subcellular location">
    <subcellularLocation>
        <location evidence="4">Secreted</location>
    </subcellularLocation>
</comment>
<comment type="alternative products">
    <event type="alternative splicing"/>
    <isoform>
        <id>C9JL84-1</id>
        <name>1</name>
        <sequence type="displayed"/>
    </isoform>
    <isoform>
        <id>C9JL84-2</id>
        <name>2</name>
        <name>PLA2L</name>
        <sequence type="described" ref="VSP_039212"/>
    </isoform>
    <text>Additional isoforms seem to exist, due to intergenic splicing between the HHLA1 and OC90 genes. This event may be induced by the LTR promoter of an endogeneous retrovirus of the HERV-H family, localized in the intron of the HHLA1 gene.</text>
</comment>
<comment type="miscellaneous">
    <molecule>Isoform 2</molecule>
    <text evidence="4">Expressed in teratocarcinoma cell lines.</text>
</comment>
<evidence type="ECO:0000255" key="1"/>
<evidence type="ECO:0000256" key="2">
    <source>
        <dbReference type="SAM" id="MobiDB-lite"/>
    </source>
</evidence>
<evidence type="ECO:0000303" key="3">
    <source>
    </source>
</evidence>
<evidence type="ECO:0000305" key="4"/>